<gene>
    <name evidence="2" type="primary">ddl</name>
    <name type="synonym">ddlA</name>
    <name type="ordered locus">WIGBR2170</name>
</gene>
<protein>
    <recommendedName>
        <fullName evidence="2">D-alanine--D-alanine ligase</fullName>
        <ecNumber evidence="2">6.3.2.4</ecNumber>
    </recommendedName>
    <alternativeName>
        <fullName evidence="2">D-Ala-D-Ala ligase</fullName>
    </alternativeName>
    <alternativeName>
        <fullName evidence="2">D-alanylalanine synthetase</fullName>
    </alternativeName>
</protein>
<organism>
    <name type="scientific">Wigglesworthia glossinidia brevipalpis</name>
    <dbReference type="NCBI Taxonomy" id="36870"/>
    <lineage>
        <taxon>Bacteria</taxon>
        <taxon>Pseudomonadati</taxon>
        <taxon>Pseudomonadota</taxon>
        <taxon>Gammaproteobacteria</taxon>
        <taxon>Enterobacterales</taxon>
        <taxon>Erwiniaceae</taxon>
        <taxon>Wigglesworthia</taxon>
    </lineage>
</organism>
<proteinExistence type="inferred from homology"/>
<sequence>MKKTVAVLFGGESKEHEISLQSSISIINAIDKKKYNIILIGVEKNGKIGIRSINNYILFKYNINYIKLAPAVSYLYIIPGKNNYQFYSLKNKKMLKIDVIFSILHGSNGENGAFQGLFNTIYTPFVGSNVLSSSICMDKDISKRILSTFGISVVPSITLYYENYKKKINKIINNIKFPCCIKPSNQGSSFGVNVANDFISLKESIDVAFLYSKKILIEPFIQGREIEVGVLGNRNVISSVCGEIKFKKIFYDYKEKYISKKTKIIIPAKISNEISNKIKKIAKLAFISLECSIMARVDFFLTKNKKIFLNEINTIPGFTKNSIYPKLWSKSGLDFKSLINKLILLTIYKK</sequence>
<name>DDL_WIGBR</name>
<reference key="1">
    <citation type="journal article" date="2002" name="Nat. Genet.">
        <title>Genome sequence of the endocellular obligate symbiont of tsetse flies, Wigglesworthia glossinidia.</title>
        <authorList>
            <person name="Akman L."/>
            <person name="Yamashita A."/>
            <person name="Watanabe H."/>
            <person name="Oshima K."/>
            <person name="Shiba T."/>
            <person name="Hattori M."/>
            <person name="Aksoy S."/>
        </authorList>
    </citation>
    <scope>NUCLEOTIDE SEQUENCE [LARGE SCALE GENOMIC DNA]</scope>
</reference>
<keyword id="KW-0067">ATP-binding</keyword>
<keyword id="KW-0133">Cell shape</keyword>
<keyword id="KW-0961">Cell wall biogenesis/degradation</keyword>
<keyword id="KW-0963">Cytoplasm</keyword>
<keyword id="KW-0436">Ligase</keyword>
<keyword id="KW-0460">Magnesium</keyword>
<keyword id="KW-0464">Manganese</keyword>
<keyword id="KW-0479">Metal-binding</keyword>
<keyword id="KW-0547">Nucleotide-binding</keyword>
<keyword id="KW-0573">Peptidoglycan synthesis</keyword>
<keyword id="KW-1185">Reference proteome</keyword>
<comment type="function">
    <text evidence="2">Cell wall formation.</text>
</comment>
<comment type="catalytic activity">
    <reaction evidence="2">
        <text>2 D-alanine + ATP = D-alanyl-D-alanine + ADP + phosphate + H(+)</text>
        <dbReference type="Rhea" id="RHEA:11224"/>
        <dbReference type="ChEBI" id="CHEBI:15378"/>
        <dbReference type="ChEBI" id="CHEBI:30616"/>
        <dbReference type="ChEBI" id="CHEBI:43474"/>
        <dbReference type="ChEBI" id="CHEBI:57416"/>
        <dbReference type="ChEBI" id="CHEBI:57822"/>
        <dbReference type="ChEBI" id="CHEBI:456216"/>
        <dbReference type="EC" id="6.3.2.4"/>
    </reaction>
</comment>
<comment type="cofactor">
    <cofactor evidence="1">
        <name>Mg(2+)</name>
        <dbReference type="ChEBI" id="CHEBI:18420"/>
    </cofactor>
    <cofactor evidence="1">
        <name>Mn(2+)</name>
        <dbReference type="ChEBI" id="CHEBI:29035"/>
    </cofactor>
    <text evidence="1">Binds 2 magnesium or manganese ions per subunit.</text>
</comment>
<comment type="pathway">
    <text evidence="2">Cell wall biogenesis; peptidoglycan biosynthesis.</text>
</comment>
<comment type="subcellular location">
    <subcellularLocation>
        <location evidence="2">Cytoplasm</location>
    </subcellularLocation>
</comment>
<comment type="similarity">
    <text evidence="2">Belongs to the D-alanine--D-alanine ligase family.</text>
</comment>
<feature type="chain" id="PRO_0000177905" description="D-alanine--D-alanine ligase">
    <location>
        <begin position="1"/>
        <end position="350"/>
    </location>
</feature>
<feature type="domain" description="ATP-grasp" evidence="2">
    <location>
        <begin position="143"/>
        <end position="344"/>
    </location>
</feature>
<feature type="binding site" evidence="2">
    <location>
        <begin position="172"/>
        <end position="227"/>
    </location>
    <ligand>
        <name>ATP</name>
        <dbReference type="ChEBI" id="CHEBI:30616"/>
    </ligand>
</feature>
<feature type="binding site" evidence="2">
    <location>
        <position position="298"/>
    </location>
    <ligand>
        <name>Mg(2+)</name>
        <dbReference type="ChEBI" id="CHEBI:18420"/>
        <label>1</label>
    </ligand>
</feature>
<feature type="binding site" evidence="2">
    <location>
        <position position="311"/>
    </location>
    <ligand>
        <name>Mg(2+)</name>
        <dbReference type="ChEBI" id="CHEBI:18420"/>
        <label>1</label>
    </ligand>
</feature>
<feature type="binding site" evidence="2">
    <location>
        <position position="311"/>
    </location>
    <ligand>
        <name>Mg(2+)</name>
        <dbReference type="ChEBI" id="CHEBI:18420"/>
        <label>2</label>
    </ligand>
</feature>
<feature type="binding site" evidence="2">
    <location>
        <position position="313"/>
    </location>
    <ligand>
        <name>Mg(2+)</name>
        <dbReference type="ChEBI" id="CHEBI:18420"/>
        <label>2</label>
    </ligand>
</feature>
<accession>Q8D2Y5</accession>
<dbReference type="EC" id="6.3.2.4" evidence="2"/>
<dbReference type="EMBL" id="BA000021">
    <property type="protein sequence ID" value="BAC24363.1"/>
    <property type="molecule type" value="Genomic_DNA"/>
</dbReference>
<dbReference type="SMR" id="Q8D2Y5"/>
<dbReference type="STRING" id="36870.gene:10368705"/>
<dbReference type="KEGG" id="wbr:ddlA"/>
<dbReference type="eggNOG" id="COG1181">
    <property type="taxonomic scope" value="Bacteria"/>
</dbReference>
<dbReference type="HOGENOM" id="CLU_039268_0_1_6"/>
<dbReference type="OrthoDB" id="9813261at2"/>
<dbReference type="UniPathway" id="UPA00219"/>
<dbReference type="Proteomes" id="UP000000562">
    <property type="component" value="Chromosome"/>
</dbReference>
<dbReference type="GO" id="GO:0005829">
    <property type="term" value="C:cytosol"/>
    <property type="evidence" value="ECO:0007669"/>
    <property type="project" value="TreeGrafter"/>
</dbReference>
<dbReference type="GO" id="GO:0005524">
    <property type="term" value="F:ATP binding"/>
    <property type="evidence" value="ECO:0007669"/>
    <property type="project" value="UniProtKB-KW"/>
</dbReference>
<dbReference type="GO" id="GO:0008716">
    <property type="term" value="F:D-alanine-D-alanine ligase activity"/>
    <property type="evidence" value="ECO:0007669"/>
    <property type="project" value="UniProtKB-UniRule"/>
</dbReference>
<dbReference type="GO" id="GO:0046872">
    <property type="term" value="F:metal ion binding"/>
    <property type="evidence" value="ECO:0007669"/>
    <property type="project" value="UniProtKB-KW"/>
</dbReference>
<dbReference type="GO" id="GO:0071555">
    <property type="term" value="P:cell wall organization"/>
    <property type="evidence" value="ECO:0007669"/>
    <property type="project" value="UniProtKB-KW"/>
</dbReference>
<dbReference type="GO" id="GO:0009252">
    <property type="term" value="P:peptidoglycan biosynthetic process"/>
    <property type="evidence" value="ECO:0007669"/>
    <property type="project" value="UniProtKB-UniRule"/>
</dbReference>
<dbReference type="GO" id="GO:0008360">
    <property type="term" value="P:regulation of cell shape"/>
    <property type="evidence" value="ECO:0007669"/>
    <property type="project" value="UniProtKB-KW"/>
</dbReference>
<dbReference type="FunFam" id="3.30.470.20:FF:000008">
    <property type="entry name" value="D-alanine--D-alanine ligase"/>
    <property type="match status" value="1"/>
</dbReference>
<dbReference type="Gene3D" id="3.40.50.20">
    <property type="match status" value="1"/>
</dbReference>
<dbReference type="Gene3D" id="3.30.1490.20">
    <property type="entry name" value="ATP-grasp fold, A domain"/>
    <property type="match status" value="1"/>
</dbReference>
<dbReference type="Gene3D" id="3.30.470.20">
    <property type="entry name" value="ATP-grasp fold, B domain"/>
    <property type="match status" value="1"/>
</dbReference>
<dbReference type="HAMAP" id="MF_00047">
    <property type="entry name" value="Dala_Dala_lig"/>
    <property type="match status" value="1"/>
</dbReference>
<dbReference type="InterPro" id="IPR011761">
    <property type="entry name" value="ATP-grasp"/>
</dbReference>
<dbReference type="InterPro" id="IPR013815">
    <property type="entry name" value="ATP_grasp_subdomain_1"/>
</dbReference>
<dbReference type="InterPro" id="IPR000291">
    <property type="entry name" value="D-Ala_lig_Van_CS"/>
</dbReference>
<dbReference type="InterPro" id="IPR005905">
    <property type="entry name" value="D_ala_D_ala"/>
</dbReference>
<dbReference type="InterPro" id="IPR011095">
    <property type="entry name" value="Dala_Dala_lig_C"/>
</dbReference>
<dbReference type="InterPro" id="IPR011127">
    <property type="entry name" value="Dala_Dala_lig_N"/>
</dbReference>
<dbReference type="InterPro" id="IPR016185">
    <property type="entry name" value="PreATP-grasp_dom_sf"/>
</dbReference>
<dbReference type="NCBIfam" id="TIGR01205">
    <property type="entry name" value="D_ala_D_alaTIGR"/>
    <property type="match status" value="1"/>
</dbReference>
<dbReference type="NCBIfam" id="NF002528">
    <property type="entry name" value="PRK01966.1-4"/>
    <property type="match status" value="1"/>
</dbReference>
<dbReference type="PANTHER" id="PTHR23132">
    <property type="entry name" value="D-ALANINE--D-ALANINE LIGASE"/>
    <property type="match status" value="1"/>
</dbReference>
<dbReference type="PANTHER" id="PTHR23132:SF25">
    <property type="entry name" value="D-ALANINE--D-ALANINE LIGASE A"/>
    <property type="match status" value="1"/>
</dbReference>
<dbReference type="Pfam" id="PF07478">
    <property type="entry name" value="Dala_Dala_lig_C"/>
    <property type="match status" value="1"/>
</dbReference>
<dbReference type="Pfam" id="PF01820">
    <property type="entry name" value="Dala_Dala_lig_N"/>
    <property type="match status" value="1"/>
</dbReference>
<dbReference type="PIRSF" id="PIRSF039102">
    <property type="entry name" value="Ddl/VanB"/>
    <property type="match status" value="1"/>
</dbReference>
<dbReference type="SUPFAM" id="SSF56059">
    <property type="entry name" value="Glutathione synthetase ATP-binding domain-like"/>
    <property type="match status" value="1"/>
</dbReference>
<dbReference type="SUPFAM" id="SSF52440">
    <property type="entry name" value="PreATP-grasp domain"/>
    <property type="match status" value="1"/>
</dbReference>
<dbReference type="PROSITE" id="PS50975">
    <property type="entry name" value="ATP_GRASP"/>
    <property type="match status" value="1"/>
</dbReference>
<dbReference type="PROSITE" id="PS00843">
    <property type="entry name" value="DALA_DALA_LIGASE_1"/>
    <property type="match status" value="1"/>
</dbReference>
<dbReference type="PROSITE" id="PS00844">
    <property type="entry name" value="DALA_DALA_LIGASE_2"/>
    <property type="match status" value="1"/>
</dbReference>
<evidence type="ECO:0000250" key="1"/>
<evidence type="ECO:0000255" key="2">
    <source>
        <dbReference type="HAMAP-Rule" id="MF_00047"/>
    </source>
</evidence>